<protein>
    <recommendedName>
        <fullName evidence="11">Cartilage oligomeric matrix protein</fullName>
        <shortName>COMP</shortName>
    </recommendedName>
</protein>
<name>COMP_MOUSE</name>
<proteinExistence type="evidence at protein level"/>
<feature type="signal peptide" evidence="4">
    <location>
        <begin position="1"/>
        <end position="19"/>
    </location>
</feature>
<feature type="chain" id="PRO_0000035858" description="Cartilage oligomeric matrix protein">
    <location>
        <begin position="20"/>
        <end position="755"/>
    </location>
</feature>
<feature type="domain" description="EGF-like 1" evidence="5">
    <location>
        <begin position="85"/>
        <end position="124"/>
    </location>
</feature>
<feature type="domain" description="EGF-like 2; calcium-binding" evidence="5">
    <location>
        <begin position="125"/>
        <end position="177"/>
    </location>
</feature>
<feature type="domain" description="EGF-like 3; calcium-binding" evidence="5">
    <location>
        <begin position="178"/>
        <end position="220"/>
    </location>
</feature>
<feature type="domain" description="EGF-like 4" evidence="5">
    <location>
        <begin position="223"/>
        <end position="265"/>
    </location>
</feature>
<feature type="repeat" description="TSP type-3 1">
    <location>
        <begin position="266"/>
        <end position="298"/>
    </location>
</feature>
<feature type="repeat" description="TSP type-3 2">
    <location>
        <begin position="299"/>
        <end position="334"/>
    </location>
</feature>
<feature type="repeat" description="TSP type-3 3">
    <location>
        <begin position="335"/>
        <end position="357"/>
    </location>
</feature>
<feature type="repeat" description="TSP type-3 4">
    <location>
        <begin position="358"/>
        <end position="393"/>
    </location>
</feature>
<feature type="repeat" description="TSP type-3 5">
    <location>
        <begin position="394"/>
        <end position="416"/>
    </location>
</feature>
<feature type="repeat" description="TSP type-3 6">
    <location>
        <begin position="417"/>
        <end position="454"/>
    </location>
</feature>
<feature type="repeat" description="TSP type-3 7">
    <location>
        <begin position="455"/>
        <end position="490"/>
    </location>
</feature>
<feature type="repeat" description="TSP type-3 8">
    <location>
        <begin position="491"/>
        <end position="526"/>
    </location>
</feature>
<feature type="domain" description="TSP C-terminal" evidence="6">
    <location>
        <begin position="530"/>
        <end position="744"/>
    </location>
</feature>
<feature type="region of interest" description="COMP N-terminal">
    <location>
        <begin position="21"/>
        <end position="84"/>
    </location>
</feature>
<feature type="region of interest" description="Disordered" evidence="7">
    <location>
        <begin position="296"/>
        <end position="341"/>
    </location>
</feature>
<feature type="region of interest" description="Disordered" evidence="7">
    <location>
        <begin position="353"/>
        <end position="501"/>
    </location>
</feature>
<feature type="region of interest" description="Mediates cell survival and induction of the IAP family of survival proteins" evidence="1">
    <location>
        <begin position="525"/>
        <end position="755"/>
    </location>
</feature>
<feature type="compositionally biased region" description="Basic and acidic residues" evidence="7">
    <location>
        <begin position="332"/>
        <end position="341"/>
    </location>
</feature>
<feature type="compositionally biased region" description="Basic and acidic residues" evidence="7">
    <location>
        <begin position="353"/>
        <end position="368"/>
    </location>
</feature>
<feature type="compositionally biased region" description="Basic and acidic residues" evidence="7">
    <location>
        <begin position="412"/>
        <end position="424"/>
    </location>
</feature>
<feature type="compositionally biased region" description="Basic and acidic residues" evidence="7">
    <location>
        <begin position="456"/>
        <end position="465"/>
    </location>
</feature>
<feature type="modified residue" description="Phosphoserine" evidence="18">
    <location>
        <position position="394"/>
    </location>
</feature>
<feature type="glycosylation site" description="N-linked (GlcNAc...) asparagine" evidence="4">
    <location>
        <position position="119"/>
    </location>
</feature>
<feature type="glycosylation site" description="N-linked (GlcNAc...) asparagine" evidence="4">
    <location>
        <position position="740"/>
    </location>
</feature>
<feature type="disulfide bond" description="Interchain (with C-71)" evidence="8 13 14 15 16 17">
    <location>
        <position position="68"/>
    </location>
</feature>
<feature type="disulfide bond" description="Interchain (with C-68)" evidence="8 13 14 15 16 17">
    <location>
        <position position="71"/>
    </location>
</feature>
<feature type="disulfide bond" evidence="5">
    <location>
        <begin position="89"/>
        <end position="100"/>
    </location>
</feature>
<feature type="disulfide bond" evidence="5">
    <location>
        <begin position="94"/>
        <end position="109"/>
    </location>
</feature>
<feature type="disulfide bond" evidence="5">
    <location>
        <begin position="112"/>
        <end position="123"/>
    </location>
</feature>
<feature type="disulfide bond" evidence="5">
    <location>
        <begin position="129"/>
        <end position="140"/>
    </location>
</feature>
<feature type="disulfide bond" evidence="5">
    <location>
        <begin position="134"/>
        <end position="149"/>
    </location>
</feature>
<feature type="disulfide bond" evidence="5">
    <location>
        <begin position="152"/>
        <end position="176"/>
    </location>
</feature>
<feature type="disulfide bond" evidence="5">
    <location>
        <begin position="182"/>
        <end position="195"/>
    </location>
</feature>
<feature type="disulfide bond" evidence="5">
    <location>
        <begin position="189"/>
        <end position="204"/>
    </location>
</feature>
<feature type="disulfide bond" evidence="5">
    <location>
        <begin position="207"/>
        <end position="219"/>
    </location>
</feature>
<feature type="disulfide bond" evidence="5">
    <location>
        <begin position="227"/>
        <end position="241"/>
    </location>
</feature>
<feature type="disulfide bond" evidence="5">
    <location>
        <begin position="235"/>
        <end position="251"/>
    </location>
</feature>
<feature type="disulfide bond" evidence="5">
    <location>
        <begin position="253"/>
        <end position="264"/>
    </location>
</feature>
<feature type="disulfide bond" evidence="5">
    <location>
        <begin position="280"/>
        <end position="285"/>
    </location>
</feature>
<feature type="disulfide bond" evidence="5">
    <location>
        <begin position="290"/>
        <end position="310"/>
    </location>
</feature>
<feature type="disulfide bond" evidence="5">
    <location>
        <begin position="326"/>
        <end position="346"/>
    </location>
</feature>
<feature type="disulfide bond" evidence="5">
    <location>
        <begin position="349"/>
        <end position="369"/>
    </location>
</feature>
<feature type="disulfide bond" evidence="5">
    <location>
        <begin position="385"/>
        <end position="405"/>
    </location>
</feature>
<feature type="disulfide bond" evidence="5">
    <location>
        <begin position="408"/>
        <end position="428"/>
    </location>
</feature>
<feature type="disulfide bond" evidence="5">
    <location>
        <begin position="446"/>
        <end position="466"/>
    </location>
</feature>
<feature type="disulfide bond" evidence="5">
    <location>
        <begin position="482"/>
        <end position="502"/>
    </location>
</feature>
<feature type="disulfide bond" evidence="5">
    <location>
        <begin position="518"/>
        <end position="739"/>
    </location>
</feature>
<feature type="mutagenesis site" description="Equivalent to human variant V66E involved in CTS2 disease. Reduces secretion in tendon cells and nhibits oligomerization. Mutant mice develop inflammation and fibrosis in Achilles tendons and carpal tunnel. They show compromised regenerative capability of tendons." evidence="10">
    <original>V</original>
    <variation>E</variation>
    <location>
        <position position="65"/>
    </location>
</feature>
<feature type="sequence conflict" description="In Ref. 1; AAD01972." evidence="11" ref="1">
    <original>QQ</original>
    <variation>HE</variation>
    <location>
        <begin position="53"/>
        <end position="54"/>
    </location>
</feature>
<feature type="helix" evidence="19">
    <location>
        <begin position="30"/>
        <end position="66"/>
    </location>
</feature>
<reference key="1">
    <citation type="journal article" date="2000" name="J. Orthop. Res.">
        <title>Molecular cloning, sequencing, and tissue and developmental expression of mouse cartilage oligomeric matrix protein (COMP).</title>
        <authorList>
            <person name="Fang C."/>
            <person name="Carlson C.S."/>
            <person name="Leslie M.P."/>
            <person name="Tulli H."/>
            <person name="Stolerman E."/>
            <person name="Perris R."/>
            <person name="Ni L."/>
            <person name="Di Cesare P.E."/>
        </authorList>
    </citation>
    <scope>NUCLEOTIDE SEQUENCE [MRNA]</scope>
    <source>
        <tissue>Cartilage</tissue>
    </source>
</reference>
<reference key="2">
    <citation type="journal article" date="2009" name="PLoS Biol.">
        <title>Lineage-specific biology revealed by a finished genome assembly of the mouse.</title>
        <authorList>
            <person name="Church D.M."/>
            <person name="Goodstadt L."/>
            <person name="Hillier L.W."/>
            <person name="Zody M.C."/>
            <person name="Goldstein S."/>
            <person name="She X."/>
            <person name="Bult C.J."/>
            <person name="Agarwala R."/>
            <person name="Cherry J.L."/>
            <person name="DiCuccio M."/>
            <person name="Hlavina W."/>
            <person name="Kapustin Y."/>
            <person name="Meric P."/>
            <person name="Maglott D."/>
            <person name="Birtle Z."/>
            <person name="Marques A.C."/>
            <person name="Graves T."/>
            <person name="Zhou S."/>
            <person name="Teague B."/>
            <person name="Potamousis K."/>
            <person name="Churas C."/>
            <person name="Place M."/>
            <person name="Herschleb J."/>
            <person name="Runnheim R."/>
            <person name="Forrest D."/>
            <person name="Amos-Landgraf J."/>
            <person name="Schwartz D.C."/>
            <person name="Cheng Z."/>
            <person name="Lindblad-Toh K."/>
            <person name="Eichler E.E."/>
            <person name="Ponting C.P."/>
        </authorList>
    </citation>
    <scope>NUCLEOTIDE SEQUENCE [LARGE SCALE GENOMIC DNA]</scope>
    <source>
        <strain>C57BL/6J</strain>
    </source>
</reference>
<reference key="3">
    <citation type="submission" date="2005-07" db="EMBL/GenBank/DDBJ databases">
        <authorList>
            <person name="Mural R.J."/>
            <person name="Adams M.D."/>
            <person name="Myers E.W."/>
            <person name="Smith H.O."/>
            <person name="Venter J.C."/>
        </authorList>
    </citation>
    <scope>NUCLEOTIDE SEQUENCE [LARGE SCALE GENOMIC DNA]</scope>
</reference>
<reference key="4">
    <citation type="journal article" date="2010" name="Cell">
        <title>A tissue-specific atlas of mouse protein phosphorylation and expression.</title>
        <authorList>
            <person name="Huttlin E.L."/>
            <person name="Jedrychowski M.P."/>
            <person name="Elias J.E."/>
            <person name="Goswami T."/>
            <person name="Rad R."/>
            <person name="Beausoleil S.A."/>
            <person name="Villen J."/>
            <person name="Haas W."/>
            <person name="Sowa M.E."/>
            <person name="Gygi S.P."/>
        </authorList>
    </citation>
    <scope>PHOSPHORYLATION [LARGE SCALE ANALYSIS] AT SER-394</scope>
    <scope>IDENTIFICATION BY MASS SPECTROMETRY [LARGE SCALE ANALYSIS]</scope>
    <source>
        <tissue>Testis</tissue>
    </source>
</reference>
<reference key="5">
    <citation type="journal article" date="2011" name="Osteoarthritis Cartilage">
        <title>Snorc is a novel cartilage specific small membrane proteoglycan expressed in differentiating and articular chondrocytes.</title>
        <authorList>
            <person name="Heinonen J."/>
            <person name="Taipaleenmaeki H."/>
            <person name="Roering P."/>
            <person name="Takatalo M."/>
            <person name="Harkness L."/>
            <person name="Sandholm J."/>
            <person name="Uusitalo-Jaervinen H."/>
            <person name="Kassem M."/>
            <person name="Kiviranta I."/>
            <person name="Laitala-Leinonen T."/>
            <person name="Saeaemaenen A.M."/>
        </authorList>
    </citation>
    <scope>TISSUE SPECIFICITY</scope>
    <scope>DEVELOPMENTAL STAGE</scope>
</reference>
<reference key="6">
    <citation type="journal article" date="2020" name="Nat. Commun.">
        <title>Mutations in COMP cause familial carpal tunnel syndrome.</title>
        <authorList>
            <person name="Li C."/>
            <person name="Wang N."/>
            <person name="Schaeffer A.A."/>
            <person name="Liu X."/>
            <person name="Zhao Z."/>
            <person name="Elliott G."/>
            <person name="Garrett L."/>
            <person name="Choi N.T."/>
            <person name="Wang Y."/>
            <person name="Wang Y."/>
            <person name="Wang C."/>
            <person name="Wang J."/>
            <person name="Chan D."/>
            <person name="Su P."/>
            <person name="Cui S."/>
            <person name="Yang Y."/>
            <person name="Gao B."/>
        </authorList>
    </citation>
    <scope>FUNCTION</scope>
    <scope>MUTAGENESIS OF VAL-65</scope>
    <scope>TISSUE SPECIFICITY</scope>
    <scope>SUBCELLULAR LOCATION</scope>
</reference>
<reference key="7">
    <citation type="journal article" date="2020" name="Nat. Commun.">
        <title>Author Correction: Mutations in COMP cause familial carpal tunnel syndrome.</title>
        <authorList>
            <person name="Li C."/>
            <person name="Wang N."/>
            <person name="Schaeffer A.A."/>
            <person name="Liu X."/>
            <person name="Zhao Z."/>
            <person name="Elliott G."/>
            <person name="Garrett L."/>
            <person name="Choi N.T."/>
            <person name="Wang Y."/>
            <person name="Wang Y."/>
            <person name="Wang C."/>
            <person name="Wang J."/>
            <person name="Chan D."/>
            <person name="Su P."/>
            <person name="Cui S."/>
            <person name="Yang Y."/>
            <person name="Gao B."/>
        </authorList>
    </citation>
    <scope>ERRATUM OF PUBMED:32686688</scope>
</reference>
<reference key="8">
    <citation type="journal article" date="2002" name="EMBO J.">
        <title>Storage function of cartilage oligomeric matrix protein: the crystal structure of the coiled-coil domain in complex with vitamin D(3).</title>
        <authorList>
            <person name="Ozbek S."/>
            <person name="Engel J."/>
            <person name="Stetefeld J."/>
        </authorList>
    </citation>
    <scope>X-RAY CRYSTALLOGRAPHY (1.7 ANGSTROMS) OF 28-71</scope>
    <scope>DISULFIDE BONDS</scope>
</reference>
<gene>
    <name evidence="12" type="primary">Comp</name>
</gene>
<keyword id="KW-0002">3D-structure</keyword>
<keyword id="KW-0053">Apoptosis</keyword>
<keyword id="KW-0106">Calcium</keyword>
<keyword id="KW-0130">Cell adhesion</keyword>
<keyword id="KW-1015">Disulfide bond</keyword>
<keyword id="KW-0245">EGF-like domain</keyword>
<keyword id="KW-0272">Extracellular matrix</keyword>
<keyword id="KW-0325">Glycoprotein</keyword>
<keyword id="KW-0358">Heparin-binding</keyword>
<keyword id="KW-0597">Phosphoprotein</keyword>
<keyword id="KW-1185">Reference proteome</keyword>
<keyword id="KW-0677">Repeat</keyword>
<keyword id="KW-0964">Secreted</keyword>
<keyword id="KW-0732">Signal</keyword>
<organism>
    <name type="scientific">Mus musculus</name>
    <name type="common">Mouse</name>
    <dbReference type="NCBI Taxonomy" id="10090"/>
    <lineage>
        <taxon>Eukaryota</taxon>
        <taxon>Metazoa</taxon>
        <taxon>Chordata</taxon>
        <taxon>Craniata</taxon>
        <taxon>Vertebrata</taxon>
        <taxon>Euteleostomi</taxon>
        <taxon>Mammalia</taxon>
        <taxon>Eutheria</taxon>
        <taxon>Euarchontoglires</taxon>
        <taxon>Glires</taxon>
        <taxon>Rodentia</taxon>
        <taxon>Myomorpha</taxon>
        <taxon>Muroidea</taxon>
        <taxon>Muridae</taxon>
        <taxon>Murinae</taxon>
        <taxon>Mus</taxon>
        <taxon>Mus</taxon>
    </lineage>
</organism>
<comment type="function">
    <text evidence="2 3 10">Plays a role in the structural integrity of cartilage via its interaction with other extracellular matrix proteins such as the collagens and fibronectin (PubMed:32686688). Can mediate the interaction of chondrocytes with the cartilage extracellular matrix through interaction with cell surface integrin receptors. Could play a role in the pathogenesis of osteoarthritis. Potent suppressor of apoptosis in both primary chondrocytes and transformed cells. Suppresses apoptosis by blocking the activation of caspase-3 and by inducing the IAP family of survival proteins (BIRC3, BIRC2, BIRC5 and XIAP) (By similarity). Essential for maintaining a vascular smooth muscle cells (VSMCs) contractile/differentiated phenotype under physiological and pathological stimuli. Maintains this phenotype of VSMCs by interacting with ITGA7 (By similarity).</text>
</comment>
<comment type="cofactor">
    <cofactor evidence="3">
        <name>Ca(2+)</name>
        <dbReference type="ChEBI" id="CHEBI:29108"/>
    </cofactor>
    <text evidence="3">Binds 11-14 calcium ions per subunit.</text>
</comment>
<comment type="subunit">
    <text evidence="2 3">Pentamer; disulfide-linked. Exists in a more compact conformation in the presence of calcium and shows a more extended conformation in the absence of calcium. Interacts with ITGB3, ITGA5 and FN1. Binding to FN1 requires the presence of divalent cations (Ca(2+), Mg(2+) or Mn(2+)). The greatest amount of binding is seen in the presence of Mn(2+). Interacts with MATN1, MATN3, MATN4 and ACAN. Binds heparin, heparan sulfate and chondroitin sulfate. EDTA dimishes significantly its binding to ACAN and abolishes its binding to MATN3, MATN4 and chondroitin sulfate. Interacts with collagen I, II and IX, and interaction with these collagens is dependent on the presence of zinc ions. Interacts with ADAMTS12 (By similarity). Interacts with ITGA7 (By similarity).</text>
</comment>
<comment type="interaction">
    <interactant intactId="EBI-9028018">
        <id>Q9R0G6</id>
    </interactant>
    <interactant intactId="EBI-9028051">
        <id>P58397</id>
        <label>ADAMTS12</label>
    </interactant>
    <organismsDiffer>true</organismsDiffer>
    <experiments>3</experiments>
</comment>
<comment type="subcellular location">
    <subcellularLocation>
        <location evidence="10">Secreted</location>
        <location evidence="10">Extracellular space</location>
        <location evidence="10">Extracellular matrix</location>
    </subcellularLocation>
</comment>
<comment type="tissue specificity">
    <text evidence="9 10">Expressed in cartilage, including nasal, knee epiphyseal and rib tissues. Abundantly expressed in chondrocyte and tendon extracellular matrix (at protein level) (PubMed:32686688).</text>
</comment>
<comment type="developmental stage">
    <text evidence="9">In knee epiphyseal cartilage, expression is detected from 12.5 dpc onwards, with significant up-regulation at 16.5 dpc and again at postnatal day 5. Expressed at least until 10 months of age.</text>
</comment>
<comment type="domain">
    <text evidence="3">The cell attachment motif mediates the attachment to chondrocytes. It mediates the induction of both the IAP family of survival proteins and the antiapoptotic response.</text>
</comment>
<comment type="domain">
    <text evidence="3">The TSP C-terminal domain mediates interaction with FN1 and ACAN.</text>
</comment>
<comment type="domain">
    <text evidence="3">Each of the eight TSP type-3 repeats binds two calcium ions. The TSP C-terminal domain binds three calcium ions.</text>
</comment>
<comment type="PTM">
    <text evidence="3">Proteolytically cleaved by metalloproteases ADAMTS4 and ADAMTS1 with ADAMTS4 showing more potent activity.</text>
</comment>
<comment type="similarity">
    <text evidence="11">Belongs to the thrombospondin family.</text>
</comment>
<evidence type="ECO:0000250" key="1"/>
<evidence type="ECO:0000250" key="2">
    <source>
        <dbReference type="UniProtKB" id="P35444"/>
    </source>
</evidence>
<evidence type="ECO:0000250" key="3">
    <source>
        <dbReference type="UniProtKB" id="P49747"/>
    </source>
</evidence>
<evidence type="ECO:0000255" key="4"/>
<evidence type="ECO:0000255" key="5">
    <source>
        <dbReference type="PROSITE-ProRule" id="PRU00076"/>
    </source>
</evidence>
<evidence type="ECO:0000255" key="6">
    <source>
        <dbReference type="PROSITE-ProRule" id="PRU00635"/>
    </source>
</evidence>
<evidence type="ECO:0000256" key="7">
    <source>
        <dbReference type="SAM" id="MobiDB-lite"/>
    </source>
</evidence>
<evidence type="ECO:0000269" key="8">
    <source>
    </source>
</evidence>
<evidence type="ECO:0000269" key="9">
    <source>
    </source>
</evidence>
<evidence type="ECO:0000269" key="10">
    <source>
    </source>
</evidence>
<evidence type="ECO:0000305" key="11"/>
<evidence type="ECO:0000312" key="12">
    <source>
        <dbReference type="MGI" id="MGI:88469"/>
    </source>
</evidence>
<evidence type="ECO:0007744" key="13">
    <source>
        <dbReference type="PDB" id="1MZ9"/>
    </source>
</evidence>
<evidence type="ECO:0007744" key="14">
    <source>
        <dbReference type="PDB" id="3V2N"/>
    </source>
</evidence>
<evidence type="ECO:0007744" key="15">
    <source>
        <dbReference type="PDB" id="3V2P"/>
    </source>
</evidence>
<evidence type="ECO:0007744" key="16">
    <source>
        <dbReference type="PDB" id="3V2Q"/>
    </source>
</evidence>
<evidence type="ECO:0007744" key="17">
    <source>
        <dbReference type="PDB" id="3V2R"/>
    </source>
</evidence>
<evidence type="ECO:0007744" key="18">
    <source>
    </source>
</evidence>
<evidence type="ECO:0007829" key="19">
    <source>
        <dbReference type="PDB" id="1MZ9"/>
    </source>
</evidence>
<sequence length="755" mass="82342">MGPTACVLVLALAILRATGQGQIPLGGDLAPQMLRELQETNAALQDVRELLRQQVKEITFLKNTVMECDACGMQPARTPGLSVRPVPLCAPGSCFPGVVCSETATGARCGPCPPGYTGNGSHCTDVNECNAHPCFPRVRCINTSPGFHCEACPPGFSGPTHEGVGLTFAKSNKQVCTDINECETGQHNCVPNSVCVNTRGSFQCGPCQPGFVGDQTSGCQRRGQHFCPDGSPSPCHEKANCVLERDGSRSCVCAVGWAGNGLLCGRDTDLDGFPDEKLRCSERQCRKDNCVTVPNSGQEDVDRDGIGDACDPDADGDGVPNEQDNCPLVRNPDQRNSDSDKWGDACDNCRSKKNDDQKDTDLDGRGDACDDDIDGDRIRNVADNCPRVPNFDQSDSDGDGVGDACDNCPQKDNPDQRDVDHDFVGDACDSDQDQDGDGHQDSRDNCPTVPNSAQQDSDHDGKGDACDDDDDNDGVPDSRDNCRLVPNPGQEDNDRDGVGDACQGDFDADKVIDKIDVCPENAEVTLTDFRAFQTVVLDPEGDAQIDPNWVVLNQGMEIVQTMNSDPGLAVGYTAFNGVDFEGTFHVNTATDDDYAGFIFGYQDSSSFYVVMWKQMEQTYWQANPFRAVAEPGIQLKAVKSSTGPGEQLRNALWHTGDTASQVRLLWKDPRNVGWKDKTSYRWFLQHRPQVGYIRVRFYEGPELVADSNVVLDTAMRGGRLGVFCFSQENIIWANLRYRCNDTIPEDYESHRLQRV</sequence>
<accession>Q9R0G6</accession>
<accession>G3X8Q4</accession>
<dbReference type="EMBL" id="AF033530">
    <property type="protein sequence ID" value="AAD01972.1"/>
    <property type="molecule type" value="mRNA"/>
</dbReference>
<dbReference type="EMBL" id="AC158553">
    <property type="status" value="NOT_ANNOTATED_CDS"/>
    <property type="molecule type" value="Genomic_DNA"/>
</dbReference>
<dbReference type="EMBL" id="CH466569">
    <property type="protein sequence ID" value="EDL28815.1"/>
    <property type="molecule type" value="Genomic_DNA"/>
</dbReference>
<dbReference type="CCDS" id="CCDS22367.1"/>
<dbReference type="RefSeq" id="NP_057894.2">
    <property type="nucleotide sequence ID" value="NM_016685.2"/>
</dbReference>
<dbReference type="PDB" id="1MZ9">
    <property type="method" value="X-ray"/>
    <property type="resolution" value="1.70 A"/>
    <property type="chains" value="A/B/C/D/E=28-71"/>
</dbReference>
<dbReference type="PDB" id="3V2N">
    <property type="method" value="X-ray"/>
    <property type="resolution" value="1.80 A"/>
    <property type="chains" value="A/B/C/D/E=28-71"/>
</dbReference>
<dbReference type="PDB" id="3V2P">
    <property type="method" value="X-ray"/>
    <property type="resolution" value="1.87 A"/>
    <property type="chains" value="A/B/C/D/E=28-71"/>
</dbReference>
<dbReference type="PDB" id="3V2Q">
    <property type="method" value="X-ray"/>
    <property type="resolution" value="2.20 A"/>
    <property type="chains" value="A/B/C/D/E=28-71"/>
</dbReference>
<dbReference type="PDB" id="3V2R">
    <property type="method" value="X-ray"/>
    <property type="resolution" value="2.75 A"/>
    <property type="chains" value="A/B/C/D/E=28-71"/>
</dbReference>
<dbReference type="PDBsum" id="1MZ9"/>
<dbReference type="PDBsum" id="3V2N"/>
<dbReference type="PDBsum" id="3V2P"/>
<dbReference type="PDBsum" id="3V2Q"/>
<dbReference type="PDBsum" id="3V2R"/>
<dbReference type="SMR" id="Q9R0G6"/>
<dbReference type="BioGRID" id="198833">
    <property type="interactions" value="23"/>
</dbReference>
<dbReference type="ComplexPortal" id="CPX-3026">
    <property type="entry name" value="Thrombospondin 5 complex"/>
</dbReference>
<dbReference type="FunCoup" id="Q9R0G6">
    <property type="interactions" value="521"/>
</dbReference>
<dbReference type="IntAct" id="Q9R0G6">
    <property type="interactions" value="2"/>
</dbReference>
<dbReference type="STRING" id="10090.ENSMUSP00000003659"/>
<dbReference type="GlyCosmos" id="Q9R0G6">
    <property type="glycosylation" value="2 sites, No reported glycans"/>
</dbReference>
<dbReference type="GlyGen" id="Q9R0G6">
    <property type="glycosylation" value="2 sites, 2 N-linked glycans (2 sites)"/>
</dbReference>
<dbReference type="iPTMnet" id="Q9R0G6"/>
<dbReference type="PhosphoSitePlus" id="Q9R0G6"/>
<dbReference type="CPTAC" id="non-CPTAC-3351"/>
<dbReference type="jPOST" id="Q9R0G6"/>
<dbReference type="PaxDb" id="10090-ENSMUSP00000003659"/>
<dbReference type="ProteomicsDB" id="283790"/>
<dbReference type="ABCD" id="Q9R0G6">
    <property type="antibodies" value="1 sequenced antibody"/>
</dbReference>
<dbReference type="Antibodypedia" id="15160">
    <property type="antibodies" value="392 antibodies from 30 providers"/>
</dbReference>
<dbReference type="DNASU" id="12845"/>
<dbReference type="Ensembl" id="ENSMUST00000003659.9">
    <property type="protein sequence ID" value="ENSMUSP00000003659.8"/>
    <property type="gene ID" value="ENSMUSG00000031849.10"/>
</dbReference>
<dbReference type="GeneID" id="12845"/>
<dbReference type="KEGG" id="mmu:12845"/>
<dbReference type="UCSC" id="uc009mad.2">
    <property type="organism name" value="mouse"/>
</dbReference>
<dbReference type="AGR" id="MGI:88469"/>
<dbReference type="CTD" id="1311"/>
<dbReference type="MGI" id="MGI:88469">
    <property type="gene designation" value="Comp"/>
</dbReference>
<dbReference type="VEuPathDB" id="HostDB:ENSMUSG00000031849"/>
<dbReference type="eggNOG" id="ENOG502QRK8">
    <property type="taxonomic scope" value="Eukaryota"/>
</dbReference>
<dbReference type="GeneTree" id="ENSGT00940000162169"/>
<dbReference type="HOGENOM" id="CLU_009257_1_1_1"/>
<dbReference type="InParanoid" id="Q9R0G6"/>
<dbReference type="OMA" id="DSCPFIS"/>
<dbReference type="OrthoDB" id="14563at2759"/>
<dbReference type="PhylomeDB" id="Q9R0G6"/>
<dbReference type="TreeFam" id="TF324917"/>
<dbReference type="Reactome" id="R-MMU-216083">
    <property type="pathway name" value="Integrin cell surface interactions"/>
</dbReference>
<dbReference type="Reactome" id="R-MMU-3000178">
    <property type="pathway name" value="ECM proteoglycans"/>
</dbReference>
<dbReference type="BioGRID-ORCS" id="12845">
    <property type="hits" value="3 hits in 82 CRISPR screens"/>
</dbReference>
<dbReference type="EvolutionaryTrace" id="Q9R0G6"/>
<dbReference type="PRO" id="PR:Q9R0G6"/>
<dbReference type="Proteomes" id="UP000000589">
    <property type="component" value="Chromosome 8"/>
</dbReference>
<dbReference type="RNAct" id="Q9R0G6">
    <property type="molecule type" value="protein"/>
</dbReference>
<dbReference type="Bgee" id="ENSMUSG00000031849">
    <property type="expression patterns" value="Expressed in humerus cartilage element and 100 other cell types or tissues"/>
</dbReference>
<dbReference type="ExpressionAtlas" id="Q9R0G6">
    <property type="expression patterns" value="baseline and differential"/>
</dbReference>
<dbReference type="GO" id="GO:0031012">
    <property type="term" value="C:extracellular matrix"/>
    <property type="evidence" value="ECO:0007669"/>
    <property type="project" value="Ensembl"/>
</dbReference>
<dbReference type="GO" id="GO:0005576">
    <property type="term" value="C:extracellular region"/>
    <property type="evidence" value="ECO:0000314"/>
    <property type="project" value="UniProtKB"/>
</dbReference>
<dbReference type="GO" id="GO:0005615">
    <property type="term" value="C:extracellular space"/>
    <property type="evidence" value="ECO:0000314"/>
    <property type="project" value="MGI"/>
</dbReference>
<dbReference type="GO" id="GO:0032991">
    <property type="term" value="C:protein-containing complex"/>
    <property type="evidence" value="ECO:0000314"/>
    <property type="project" value="MGI"/>
</dbReference>
<dbReference type="GO" id="GO:0036122">
    <property type="term" value="F:BMP binding"/>
    <property type="evidence" value="ECO:0000353"/>
    <property type="project" value="MGI"/>
</dbReference>
<dbReference type="GO" id="GO:0005509">
    <property type="term" value="F:calcium ion binding"/>
    <property type="evidence" value="ECO:0007669"/>
    <property type="project" value="Ensembl"/>
</dbReference>
<dbReference type="GO" id="GO:0005518">
    <property type="term" value="F:collagen binding"/>
    <property type="evidence" value="ECO:0007669"/>
    <property type="project" value="Ensembl"/>
</dbReference>
<dbReference type="GO" id="GO:0043395">
    <property type="term" value="F:heparan sulfate proteoglycan binding"/>
    <property type="evidence" value="ECO:0007669"/>
    <property type="project" value="Ensembl"/>
</dbReference>
<dbReference type="GO" id="GO:0008201">
    <property type="term" value="F:heparin binding"/>
    <property type="evidence" value="ECO:0007669"/>
    <property type="project" value="UniProtKB-KW"/>
</dbReference>
<dbReference type="GO" id="GO:0005178">
    <property type="term" value="F:integrin binding"/>
    <property type="evidence" value="ECO:0000353"/>
    <property type="project" value="MGI"/>
</dbReference>
<dbReference type="GO" id="GO:0002020">
    <property type="term" value="F:protease binding"/>
    <property type="evidence" value="ECO:0000353"/>
    <property type="project" value="BHF-UCL"/>
</dbReference>
<dbReference type="GO" id="GO:0043394">
    <property type="term" value="F:proteoglycan binding"/>
    <property type="evidence" value="ECO:0000266"/>
    <property type="project" value="MGI"/>
</dbReference>
<dbReference type="GO" id="GO:0006915">
    <property type="term" value="P:apoptotic process"/>
    <property type="evidence" value="ECO:0000315"/>
    <property type="project" value="MGI"/>
</dbReference>
<dbReference type="GO" id="GO:0048844">
    <property type="term" value="P:artery morphogenesis"/>
    <property type="evidence" value="ECO:0000315"/>
    <property type="project" value="MGI"/>
</dbReference>
<dbReference type="GO" id="GO:0007596">
    <property type="term" value="P:blood coagulation"/>
    <property type="evidence" value="ECO:0000315"/>
    <property type="project" value="MGI"/>
</dbReference>
<dbReference type="GO" id="GO:0030509">
    <property type="term" value="P:BMP signaling pathway"/>
    <property type="evidence" value="ECO:0000315"/>
    <property type="project" value="MGI"/>
</dbReference>
<dbReference type="GO" id="GO:0098868">
    <property type="term" value="P:bone growth"/>
    <property type="evidence" value="ECO:0000315"/>
    <property type="project" value="MGI"/>
</dbReference>
<dbReference type="GO" id="GO:0030282">
    <property type="term" value="P:bone mineralization"/>
    <property type="evidence" value="ECO:0000315"/>
    <property type="project" value="MGI"/>
</dbReference>
<dbReference type="GO" id="GO:0060349">
    <property type="term" value="P:bone morphogenesis"/>
    <property type="evidence" value="ECO:0000316"/>
    <property type="project" value="MGI"/>
</dbReference>
<dbReference type="GO" id="GO:0051216">
    <property type="term" value="P:cartilage development"/>
    <property type="evidence" value="ECO:0000315"/>
    <property type="project" value="MGI"/>
</dbReference>
<dbReference type="GO" id="GO:1990079">
    <property type="term" value="P:cartilage homeostasis"/>
    <property type="evidence" value="ECO:0000314"/>
    <property type="project" value="UniProtKB"/>
</dbReference>
<dbReference type="GO" id="GO:0090398">
    <property type="term" value="P:cellular senescence"/>
    <property type="evidence" value="ECO:0000315"/>
    <property type="project" value="MGI"/>
</dbReference>
<dbReference type="GO" id="GO:0002063">
    <property type="term" value="P:chondrocyte development"/>
    <property type="evidence" value="ECO:0000315"/>
    <property type="project" value="MGI"/>
</dbReference>
<dbReference type="GO" id="GO:0035988">
    <property type="term" value="P:chondrocyte proliferation"/>
    <property type="evidence" value="ECO:0000315"/>
    <property type="project" value="MGI"/>
</dbReference>
<dbReference type="GO" id="GO:0030199">
    <property type="term" value="P:collagen fibril organization"/>
    <property type="evidence" value="ECO:0000315"/>
    <property type="project" value="MGI"/>
</dbReference>
<dbReference type="GO" id="GO:0003416">
    <property type="term" value="P:endochondral bone growth"/>
    <property type="evidence" value="ECO:0000315"/>
    <property type="project" value="MGI"/>
</dbReference>
<dbReference type="GO" id="GO:0003417">
    <property type="term" value="P:growth plate cartilage development"/>
    <property type="evidence" value="ECO:0000315"/>
    <property type="project" value="MGI"/>
</dbReference>
<dbReference type="GO" id="GO:0060173">
    <property type="term" value="P:limb development"/>
    <property type="evidence" value="ECO:0000315"/>
    <property type="project" value="MGI"/>
</dbReference>
<dbReference type="GO" id="GO:0035264">
    <property type="term" value="P:multicellular organism growth"/>
    <property type="evidence" value="ECO:0000315"/>
    <property type="project" value="MGI"/>
</dbReference>
<dbReference type="GO" id="GO:0055001">
    <property type="term" value="P:muscle cell development"/>
    <property type="evidence" value="ECO:0000315"/>
    <property type="project" value="MGI"/>
</dbReference>
<dbReference type="GO" id="GO:0050881">
    <property type="term" value="P:musculoskeletal movement"/>
    <property type="evidence" value="ECO:0000315"/>
    <property type="project" value="MGI"/>
</dbReference>
<dbReference type="GO" id="GO:0043066">
    <property type="term" value="P:negative regulation of apoptotic process"/>
    <property type="evidence" value="ECO:0007669"/>
    <property type="project" value="Ensembl"/>
</dbReference>
<dbReference type="GO" id="GO:1900047">
    <property type="term" value="P:negative regulation of hemostasis"/>
    <property type="evidence" value="ECO:0000315"/>
    <property type="project" value="MGI"/>
</dbReference>
<dbReference type="GO" id="GO:0050905">
    <property type="term" value="P:neuromuscular process"/>
    <property type="evidence" value="ECO:0000315"/>
    <property type="project" value="MGI"/>
</dbReference>
<dbReference type="GO" id="GO:0001503">
    <property type="term" value="P:ossification"/>
    <property type="evidence" value="ECO:0000315"/>
    <property type="project" value="MGI"/>
</dbReference>
<dbReference type="GO" id="GO:0070527">
    <property type="term" value="P:platelet aggregation"/>
    <property type="evidence" value="ECO:0000315"/>
    <property type="project" value="MGI"/>
</dbReference>
<dbReference type="GO" id="GO:1902732">
    <property type="term" value="P:positive regulation of chondrocyte proliferation"/>
    <property type="evidence" value="ECO:0000315"/>
    <property type="project" value="MGI"/>
</dbReference>
<dbReference type="GO" id="GO:0051260">
    <property type="term" value="P:protein homooligomerization"/>
    <property type="evidence" value="ECO:0000314"/>
    <property type="project" value="UniProtKB"/>
</dbReference>
<dbReference type="GO" id="GO:0016485">
    <property type="term" value="P:protein processing"/>
    <property type="evidence" value="ECO:0000315"/>
    <property type="project" value="MGI"/>
</dbReference>
<dbReference type="GO" id="GO:0009306">
    <property type="term" value="P:protein secretion"/>
    <property type="evidence" value="ECO:0000315"/>
    <property type="project" value="MGI"/>
</dbReference>
<dbReference type="GO" id="GO:0030500">
    <property type="term" value="P:regulation of bone mineralization"/>
    <property type="evidence" value="ECO:0000315"/>
    <property type="project" value="MGI"/>
</dbReference>
<dbReference type="GO" id="GO:0010468">
    <property type="term" value="P:regulation of gene expression"/>
    <property type="evidence" value="ECO:0000315"/>
    <property type="project" value="MGI"/>
</dbReference>
<dbReference type="GO" id="GO:0006986">
    <property type="term" value="P:response to unfolded protein"/>
    <property type="evidence" value="ECO:0000315"/>
    <property type="project" value="MGI"/>
</dbReference>
<dbReference type="GO" id="GO:0001501">
    <property type="term" value="P:skeletal system development"/>
    <property type="evidence" value="ECO:0000316"/>
    <property type="project" value="MGI"/>
</dbReference>
<dbReference type="GO" id="GO:0043588">
    <property type="term" value="P:skin development"/>
    <property type="evidence" value="ECO:0000315"/>
    <property type="project" value="MGI"/>
</dbReference>
<dbReference type="GO" id="GO:0035989">
    <property type="term" value="P:tendon development"/>
    <property type="evidence" value="ECO:0000315"/>
    <property type="project" value="MGI"/>
</dbReference>
<dbReference type="GO" id="GO:0097084">
    <property type="term" value="P:vascular associated smooth muscle cell development"/>
    <property type="evidence" value="ECO:0000315"/>
    <property type="project" value="MGI"/>
</dbReference>
<dbReference type="GO" id="GO:0014829">
    <property type="term" value="P:vascular associated smooth muscle contraction"/>
    <property type="evidence" value="ECO:0000315"/>
    <property type="project" value="MGI"/>
</dbReference>
<dbReference type="CDD" id="cd00054">
    <property type="entry name" value="EGF_CA"/>
    <property type="match status" value="2"/>
</dbReference>
<dbReference type="CDD" id="cd16077">
    <property type="entry name" value="TSP-5cc"/>
    <property type="match status" value="1"/>
</dbReference>
<dbReference type="FunFam" id="2.10.25.10:FF:000346">
    <property type="entry name" value="Cartilage oligomeric matrix protein"/>
    <property type="match status" value="1"/>
</dbReference>
<dbReference type="FunFam" id="4.10.1080.10:FF:000004">
    <property type="entry name" value="Cartilage oligomeric matrix protein"/>
    <property type="match status" value="1"/>
</dbReference>
<dbReference type="FunFam" id="2.10.25.10:FF:000025">
    <property type="entry name" value="Thrombospondin 3"/>
    <property type="match status" value="1"/>
</dbReference>
<dbReference type="FunFam" id="2.10.25.10:FF:000027">
    <property type="entry name" value="Thrombospondin 3"/>
    <property type="match status" value="1"/>
</dbReference>
<dbReference type="FunFam" id="2.60.120.200:FF:000002">
    <property type="entry name" value="Thrombospondin 3"/>
    <property type="match status" value="1"/>
</dbReference>
<dbReference type="FunFam" id="4.10.1080.10:FF:000001">
    <property type="entry name" value="Thrombospondin 3"/>
    <property type="match status" value="1"/>
</dbReference>
<dbReference type="FunFam" id="2.10.25.10:FF:000170">
    <property type="entry name" value="thrombospondin-3 isoform X1"/>
    <property type="match status" value="1"/>
</dbReference>
<dbReference type="FunFam" id="1.20.5.10:FF:000001">
    <property type="entry name" value="thrombospondin-3 isoform X2"/>
    <property type="match status" value="1"/>
</dbReference>
<dbReference type="Gene3D" id="1.20.5.10">
    <property type="match status" value="1"/>
</dbReference>
<dbReference type="Gene3D" id="2.60.120.200">
    <property type="match status" value="1"/>
</dbReference>
<dbReference type="Gene3D" id="2.10.25.10">
    <property type="entry name" value="Laminin"/>
    <property type="match status" value="4"/>
</dbReference>
<dbReference type="Gene3D" id="4.10.1080.10">
    <property type="entry name" value="TSP type-3 repeat"/>
    <property type="match status" value="2"/>
</dbReference>
<dbReference type="InterPro" id="IPR013320">
    <property type="entry name" value="ConA-like_dom_sf"/>
</dbReference>
<dbReference type="InterPro" id="IPR001881">
    <property type="entry name" value="EGF-like_Ca-bd_dom"/>
</dbReference>
<dbReference type="InterPro" id="IPR000742">
    <property type="entry name" value="EGF-like_dom"/>
</dbReference>
<dbReference type="InterPro" id="IPR018097">
    <property type="entry name" value="EGF_Ca-bd_CS"/>
</dbReference>
<dbReference type="InterPro" id="IPR009030">
    <property type="entry name" value="Growth_fac_rcpt_cys_sf"/>
</dbReference>
<dbReference type="InterPro" id="IPR049883">
    <property type="entry name" value="NOTCH1_EGF-like"/>
</dbReference>
<dbReference type="InterPro" id="IPR003367">
    <property type="entry name" value="Thrombospondin_3-like_rpt"/>
</dbReference>
<dbReference type="InterPro" id="IPR017897">
    <property type="entry name" value="Thrombospondin_3_rpt"/>
</dbReference>
<dbReference type="InterPro" id="IPR008859">
    <property type="entry name" value="Thrombospondin_C"/>
</dbReference>
<dbReference type="InterPro" id="IPR039081">
    <property type="entry name" value="TSP-5_cc"/>
</dbReference>
<dbReference type="InterPro" id="IPR024665">
    <property type="entry name" value="TSP/COMP_coiled-coil"/>
</dbReference>
<dbReference type="InterPro" id="IPR046970">
    <property type="entry name" value="TSP/COMP_coiled-coil_sf"/>
</dbReference>
<dbReference type="InterPro" id="IPR028974">
    <property type="entry name" value="TSP_type-3_rpt"/>
</dbReference>
<dbReference type="PANTHER" id="PTHR10199:SF88">
    <property type="entry name" value="CARTILAGE OLIGOMERIC MATRIX PROTEIN"/>
    <property type="match status" value="1"/>
</dbReference>
<dbReference type="PANTHER" id="PTHR10199">
    <property type="entry name" value="THROMBOSPONDIN"/>
    <property type="match status" value="1"/>
</dbReference>
<dbReference type="Pfam" id="PF11598">
    <property type="entry name" value="COMP"/>
    <property type="match status" value="1"/>
</dbReference>
<dbReference type="Pfam" id="PF07645">
    <property type="entry name" value="EGF_CA"/>
    <property type="match status" value="2"/>
</dbReference>
<dbReference type="Pfam" id="PF02412">
    <property type="entry name" value="TSP_3"/>
    <property type="match status" value="6"/>
</dbReference>
<dbReference type="Pfam" id="PF05735">
    <property type="entry name" value="TSP_C"/>
    <property type="match status" value="1"/>
</dbReference>
<dbReference type="SMART" id="SM00181">
    <property type="entry name" value="EGF"/>
    <property type="match status" value="4"/>
</dbReference>
<dbReference type="SMART" id="SM00179">
    <property type="entry name" value="EGF_CA"/>
    <property type="match status" value="2"/>
</dbReference>
<dbReference type="SUPFAM" id="SSF58006">
    <property type="entry name" value="Assembly domain of cartilage oligomeric matrix protein"/>
    <property type="match status" value="1"/>
</dbReference>
<dbReference type="SUPFAM" id="SSF49899">
    <property type="entry name" value="Concanavalin A-like lectins/glucanases"/>
    <property type="match status" value="1"/>
</dbReference>
<dbReference type="SUPFAM" id="SSF57184">
    <property type="entry name" value="Growth factor receptor domain"/>
    <property type="match status" value="1"/>
</dbReference>
<dbReference type="SUPFAM" id="SSF103647">
    <property type="entry name" value="TSP type-3 repeat"/>
    <property type="match status" value="3"/>
</dbReference>
<dbReference type="PROSITE" id="PS00018">
    <property type="entry name" value="EF_HAND_1"/>
    <property type="match status" value="1"/>
</dbReference>
<dbReference type="PROSITE" id="PS01186">
    <property type="entry name" value="EGF_2"/>
    <property type="match status" value="1"/>
</dbReference>
<dbReference type="PROSITE" id="PS50026">
    <property type="entry name" value="EGF_3"/>
    <property type="match status" value="3"/>
</dbReference>
<dbReference type="PROSITE" id="PS01187">
    <property type="entry name" value="EGF_CA"/>
    <property type="match status" value="2"/>
</dbReference>
<dbReference type="PROSITE" id="PS51234">
    <property type="entry name" value="TSP3"/>
    <property type="match status" value="8"/>
</dbReference>
<dbReference type="PROSITE" id="PS51236">
    <property type="entry name" value="TSP_CTER"/>
    <property type="match status" value="1"/>
</dbReference>